<sequence length="221" mass="24694">MLSTGVKSLDELLGGGFGEGVLTQIYGPYATGKTTLAVQTGLLSGKKVAYVDTEGGFSPERLSQMASARGLDPEEALSRFLLFTPGDIREQRRVIGSLKRLITPEFSLVVVDSITAHYRAEEDWRSLTSELGKQLQVLLWIARKHRIPVLVINQVHFDARAERTRPVAEQTLGYRCKDILRLDKLPTPGKRVAILERHRFRPEGGMVYFKITEKGIEDVSD</sequence>
<feature type="chain" id="PRO_1000205339" description="DNA repair and recombination protein RadB">
    <location>
        <begin position="1"/>
        <end position="221"/>
    </location>
</feature>
<organism>
    <name type="scientific">Thermococcus gammatolerans (strain DSM 15229 / JCM 11827 / EJ3)</name>
    <dbReference type="NCBI Taxonomy" id="593117"/>
    <lineage>
        <taxon>Archaea</taxon>
        <taxon>Methanobacteriati</taxon>
        <taxon>Methanobacteriota</taxon>
        <taxon>Thermococci</taxon>
        <taxon>Thermococcales</taxon>
        <taxon>Thermococcaceae</taxon>
        <taxon>Thermococcus</taxon>
    </lineage>
</organism>
<dbReference type="EMBL" id="CP001398">
    <property type="protein sequence ID" value="ACS34576.1"/>
    <property type="molecule type" value="Genomic_DNA"/>
</dbReference>
<dbReference type="RefSeq" id="WP_015859679.1">
    <property type="nucleotide sequence ID" value="NC_012804.1"/>
</dbReference>
<dbReference type="SMR" id="C5A2F7"/>
<dbReference type="STRING" id="593117.TGAM_2074"/>
<dbReference type="PaxDb" id="593117-TGAM_2074"/>
<dbReference type="GeneID" id="7988640"/>
<dbReference type="KEGG" id="tga:TGAM_2074"/>
<dbReference type="PATRIC" id="fig|593117.10.peg.2082"/>
<dbReference type="eggNOG" id="arCOG00417">
    <property type="taxonomic scope" value="Archaea"/>
</dbReference>
<dbReference type="HOGENOM" id="CLU_041732_2_0_2"/>
<dbReference type="OrthoDB" id="17644at2157"/>
<dbReference type="Proteomes" id="UP000001488">
    <property type="component" value="Chromosome"/>
</dbReference>
<dbReference type="GO" id="GO:0005524">
    <property type="term" value="F:ATP binding"/>
    <property type="evidence" value="ECO:0007669"/>
    <property type="project" value="UniProtKB-UniRule"/>
</dbReference>
<dbReference type="GO" id="GO:0140664">
    <property type="term" value="F:ATP-dependent DNA damage sensor activity"/>
    <property type="evidence" value="ECO:0007669"/>
    <property type="project" value="InterPro"/>
</dbReference>
<dbReference type="GO" id="GO:0003684">
    <property type="term" value="F:damaged DNA binding"/>
    <property type="evidence" value="ECO:0007669"/>
    <property type="project" value="UniProtKB-UniRule"/>
</dbReference>
<dbReference type="GO" id="GO:0006310">
    <property type="term" value="P:DNA recombination"/>
    <property type="evidence" value="ECO:0007669"/>
    <property type="project" value="UniProtKB-UniRule"/>
</dbReference>
<dbReference type="GO" id="GO:0006281">
    <property type="term" value="P:DNA repair"/>
    <property type="evidence" value="ECO:0007669"/>
    <property type="project" value="UniProtKB-UniRule"/>
</dbReference>
<dbReference type="Gene3D" id="3.40.50.300">
    <property type="entry name" value="P-loop containing nucleotide triphosphate hydrolases"/>
    <property type="match status" value="1"/>
</dbReference>
<dbReference type="HAMAP" id="MF_00350">
    <property type="entry name" value="RadB"/>
    <property type="match status" value="1"/>
</dbReference>
<dbReference type="InterPro" id="IPR013632">
    <property type="entry name" value="DNA_recomb/repair_Rad51_C"/>
</dbReference>
<dbReference type="InterPro" id="IPR011939">
    <property type="entry name" value="DNA_repair_and_recomb_RadB"/>
</dbReference>
<dbReference type="InterPro" id="IPR027417">
    <property type="entry name" value="P-loop_NTPase"/>
</dbReference>
<dbReference type="InterPro" id="IPR020588">
    <property type="entry name" value="RecA_ATP-bd"/>
</dbReference>
<dbReference type="NCBIfam" id="TIGR02237">
    <property type="entry name" value="recomb_radB"/>
    <property type="match status" value="1"/>
</dbReference>
<dbReference type="PANTHER" id="PTHR22942:SF47">
    <property type="entry name" value="DNA REPAIR AND RECOMBINATION PROTEIN RADB"/>
    <property type="match status" value="1"/>
</dbReference>
<dbReference type="PANTHER" id="PTHR22942">
    <property type="entry name" value="RECA/RAD51/RADA DNA STRAND-PAIRING FAMILY MEMBER"/>
    <property type="match status" value="1"/>
</dbReference>
<dbReference type="Pfam" id="PF08423">
    <property type="entry name" value="Rad51"/>
    <property type="match status" value="1"/>
</dbReference>
<dbReference type="PIRSF" id="PIRSF003336">
    <property type="entry name" value="RadB"/>
    <property type="match status" value="1"/>
</dbReference>
<dbReference type="PRINTS" id="PR01874">
    <property type="entry name" value="DNAREPAIRADA"/>
</dbReference>
<dbReference type="SUPFAM" id="SSF52540">
    <property type="entry name" value="P-loop containing nucleoside triphosphate hydrolases"/>
    <property type="match status" value="1"/>
</dbReference>
<dbReference type="PROSITE" id="PS50162">
    <property type="entry name" value="RECA_2"/>
    <property type="match status" value="1"/>
</dbReference>
<name>RADB_THEGJ</name>
<protein>
    <recommendedName>
        <fullName evidence="1">DNA repair and recombination protein RadB</fullName>
    </recommendedName>
</protein>
<keyword id="KW-0067">ATP-binding</keyword>
<keyword id="KW-0227">DNA damage</keyword>
<keyword id="KW-0233">DNA recombination</keyword>
<keyword id="KW-0238">DNA-binding</keyword>
<keyword id="KW-0547">Nucleotide-binding</keyword>
<keyword id="KW-1185">Reference proteome</keyword>
<reference key="1">
    <citation type="journal article" date="2007" name="Genome Biol.">
        <title>Genome analysis and genome-wide proteomics of Thermococcus gammatolerans, the most radioresistant organism known amongst the Archaea.</title>
        <authorList>
            <person name="Zivanovic Y."/>
            <person name="Armengaud J."/>
            <person name="Lagorce A."/>
            <person name="Leplat C."/>
            <person name="Guerin P."/>
            <person name="Dutertre M."/>
            <person name="Anthouard V."/>
            <person name="Forterre P."/>
            <person name="Wincker P."/>
            <person name="Confalonieri F."/>
        </authorList>
    </citation>
    <scope>NUCLEOTIDE SEQUENCE [LARGE SCALE GENOMIC DNA]</scope>
    <source>
        <strain>DSM 15229 / JCM 11827 / EJ3</strain>
    </source>
</reference>
<accession>C5A2F7</accession>
<proteinExistence type="inferred from homology"/>
<evidence type="ECO:0000255" key="1">
    <source>
        <dbReference type="HAMAP-Rule" id="MF_00350"/>
    </source>
</evidence>
<comment type="function">
    <text evidence="1">Involved in DNA repair and in homologous recombination. May regulate the cleavage reactions of the branch-structured DNA. Has a very weak ATPase activity that is not stimulated by DNA. Binds DNA but does not promote DNA strands exchange.</text>
</comment>
<comment type="similarity">
    <text evidence="1">Belongs to the eukaryotic RecA-like protein family. RadB subfamily.</text>
</comment>
<gene>
    <name evidence="1" type="primary">radB</name>
    <name type="ordered locus">TGAM_2074</name>
</gene>